<reference key="1">
    <citation type="journal article" date="2006" name="Nature">
        <title>Human chromosome 11 DNA sequence and analysis including novel gene identification.</title>
        <authorList>
            <person name="Taylor T.D."/>
            <person name="Noguchi H."/>
            <person name="Totoki Y."/>
            <person name="Toyoda A."/>
            <person name="Kuroki Y."/>
            <person name="Dewar K."/>
            <person name="Lloyd C."/>
            <person name="Itoh T."/>
            <person name="Takeda T."/>
            <person name="Kim D.-W."/>
            <person name="She X."/>
            <person name="Barlow K.F."/>
            <person name="Bloom T."/>
            <person name="Bruford E."/>
            <person name="Chang J.L."/>
            <person name="Cuomo C.A."/>
            <person name="Eichler E."/>
            <person name="FitzGerald M.G."/>
            <person name="Jaffe D.B."/>
            <person name="LaButti K."/>
            <person name="Nicol R."/>
            <person name="Park H.-S."/>
            <person name="Seaman C."/>
            <person name="Sougnez C."/>
            <person name="Yang X."/>
            <person name="Zimmer A.R."/>
            <person name="Zody M.C."/>
            <person name="Birren B.W."/>
            <person name="Nusbaum C."/>
            <person name="Fujiyama A."/>
            <person name="Hattori M."/>
            <person name="Rogers J."/>
            <person name="Lander E.S."/>
            <person name="Sakaki Y."/>
        </authorList>
    </citation>
    <scope>NUCLEOTIDE SEQUENCE [LARGE SCALE GENOMIC DNA]</scope>
</reference>
<evidence type="ECO:0000255" key="1"/>
<evidence type="ECO:0000256" key="2">
    <source>
        <dbReference type="SAM" id="MobiDB-lite"/>
    </source>
</evidence>
<protein>
    <recommendedName>
        <fullName>Coiled-coil domain-containing protein 179</fullName>
    </recommendedName>
</protein>
<name>CC179_HUMAN</name>
<sequence length="68" mass="8104">MCLYCWDIEPSQVNPEGPRQHHPSEVTERQLANKRIQNMQHLKKEKRRLNKRFSRPSPIPEPGLLWSS</sequence>
<organism>
    <name type="scientific">Homo sapiens</name>
    <name type="common">Human</name>
    <dbReference type="NCBI Taxonomy" id="9606"/>
    <lineage>
        <taxon>Eukaryota</taxon>
        <taxon>Metazoa</taxon>
        <taxon>Chordata</taxon>
        <taxon>Craniata</taxon>
        <taxon>Vertebrata</taxon>
        <taxon>Euteleostomi</taxon>
        <taxon>Mammalia</taxon>
        <taxon>Eutheria</taxon>
        <taxon>Euarchontoglires</taxon>
        <taxon>Primates</taxon>
        <taxon>Haplorrhini</taxon>
        <taxon>Catarrhini</taxon>
        <taxon>Hominidae</taxon>
        <taxon>Homo</taxon>
    </lineage>
</organism>
<accession>H3BU77</accession>
<gene>
    <name type="primary">CCDC179</name>
</gene>
<proteinExistence type="evidence at protein level"/>
<feature type="chain" id="PRO_0000421698" description="Coiled-coil domain-containing protein 179">
    <location>
        <begin position="1"/>
        <end position="68"/>
    </location>
</feature>
<feature type="region of interest" description="Disordered" evidence="2">
    <location>
        <begin position="11"/>
        <end position="68"/>
    </location>
</feature>
<feature type="coiled-coil region" evidence="1">
    <location>
        <begin position="27"/>
        <end position="53"/>
    </location>
</feature>
<feature type="compositionally biased region" description="Basic and acidic residues" evidence="2">
    <location>
        <begin position="18"/>
        <end position="28"/>
    </location>
</feature>
<feature type="compositionally biased region" description="Basic residues" evidence="2">
    <location>
        <begin position="41"/>
        <end position="54"/>
    </location>
</feature>
<comment type="interaction">
    <interactant intactId="EBI-17766379">
        <id>H3BU77</id>
    </interactant>
    <interactant intactId="EBI-1047489">
        <id>Q5PRF9</id>
        <label>SAMD4B</label>
    </interactant>
    <organismsDiffer>false</organismsDiffer>
    <experiments>3</experiments>
</comment>
<comment type="interaction">
    <interactant intactId="EBI-17766379">
        <id>H3BU77</id>
    </interactant>
    <interactant intactId="EBI-625509">
        <id>Q8N720</id>
        <label>ZNF655</label>
    </interactant>
    <organismsDiffer>false</organismsDiffer>
    <experiments>3</experiments>
</comment>
<keyword id="KW-0175">Coiled coil</keyword>
<keyword id="KW-1185">Reference proteome</keyword>
<dbReference type="EMBL" id="AC006299">
    <property type="status" value="NOT_ANNOTATED_CDS"/>
    <property type="molecule type" value="Genomic_DNA"/>
</dbReference>
<dbReference type="CCDS" id="CCDS58127.1"/>
<dbReference type="RefSeq" id="NP_001182566.1">
    <property type="nucleotide sequence ID" value="NM_001195637.2"/>
</dbReference>
<dbReference type="SMR" id="H3BU77"/>
<dbReference type="BioGRID" id="1527806">
    <property type="interactions" value="3"/>
</dbReference>
<dbReference type="FunCoup" id="H3BU77">
    <property type="interactions" value="1"/>
</dbReference>
<dbReference type="IntAct" id="H3BU77">
    <property type="interactions" value="2"/>
</dbReference>
<dbReference type="STRING" id="9606.ENSP00000457511"/>
<dbReference type="PhosphoSitePlus" id="H3BU77"/>
<dbReference type="BioMuta" id="CCDC179"/>
<dbReference type="PaxDb" id="9606-ENSP00000457511"/>
<dbReference type="DNASU" id="100500938"/>
<dbReference type="Ensembl" id="ENST00000532798.3">
    <property type="protein sequence ID" value="ENSP00000457511.1"/>
    <property type="gene ID" value="ENSG00000255359.3"/>
</dbReference>
<dbReference type="GeneID" id="100500938"/>
<dbReference type="KEGG" id="hsa:100500938"/>
<dbReference type="MANE-Select" id="ENST00000532798.3">
    <property type="protein sequence ID" value="ENSP00000457511.1"/>
    <property type="RefSeq nucleotide sequence ID" value="NM_001195637.2"/>
    <property type="RefSeq protein sequence ID" value="NP_001182566.1"/>
</dbReference>
<dbReference type="UCSC" id="uc021qfb.3">
    <property type="organism name" value="human"/>
</dbReference>
<dbReference type="AGR" id="HGNC:44653"/>
<dbReference type="CTD" id="100500938"/>
<dbReference type="GeneCards" id="CCDC179"/>
<dbReference type="HGNC" id="HGNC:44653">
    <property type="gene designation" value="CCDC179"/>
</dbReference>
<dbReference type="HPA" id="ENSG00000255359">
    <property type="expression patterns" value="Tissue enriched (testis)"/>
</dbReference>
<dbReference type="neXtProt" id="NX_H3BU77"/>
<dbReference type="OpenTargets" id="ENSG00000255359"/>
<dbReference type="VEuPathDB" id="HostDB:ENSG00000255359"/>
<dbReference type="eggNOG" id="ENOG502TDWU">
    <property type="taxonomic scope" value="Eukaryota"/>
</dbReference>
<dbReference type="GeneTree" id="ENSGT00660000097475"/>
<dbReference type="HOGENOM" id="CLU_2819280_0_0_1"/>
<dbReference type="InParanoid" id="H3BU77"/>
<dbReference type="OMA" id="EKRINYM"/>
<dbReference type="OrthoDB" id="9799303at2759"/>
<dbReference type="PAN-GO" id="H3BU77">
    <property type="GO annotations" value="0 GO annotations based on evolutionary models"/>
</dbReference>
<dbReference type="PathwayCommons" id="H3BU77"/>
<dbReference type="BioGRID-ORCS" id="100500938">
    <property type="hits" value="25 hits in 1117 CRISPR screens"/>
</dbReference>
<dbReference type="GenomeRNAi" id="100500938"/>
<dbReference type="Pharos" id="H3BU77">
    <property type="development level" value="Tdark"/>
</dbReference>
<dbReference type="PRO" id="PR:H3BU77"/>
<dbReference type="Proteomes" id="UP000005640">
    <property type="component" value="Chromosome 11"/>
</dbReference>
<dbReference type="RNAct" id="H3BU77">
    <property type="molecule type" value="protein"/>
</dbReference>
<dbReference type="Bgee" id="ENSG00000255359">
    <property type="expression patterns" value="Expressed in male germ line stem cell (sensu Vertebrata) in testis and 39 other cell types or tissues"/>
</dbReference>